<protein>
    <recommendedName>
        <fullName>Small nuclear ribonucleoprotein Sm D3</fullName>
        <shortName>Sm-D3</shortName>
    </recommendedName>
    <alternativeName>
        <fullName>snRNP core protein D3</fullName>
    </alternativeName>
</protein>
<reference key="1">
    <citation type="journal article" date="2002" name="Nature">
        <title>The genome sequence of Schizosaccharomyces pombe.</title>
        <authorList>
            <person name="Wood V."/>
            <person name="Gwilliam R."/>
            <person name="Rajandream M.A."/>
            <person name="Lyne M.H."/>
            <person name="Lyne R."/>
            <person name="Stewart A."/>
            <person name="Sgouros J.G."/>
            <person name="Peat N."/>
            <person name="Hayles J."/>
            <person name="Baker S.G."/>
            <person name="Basham D."/>
            <person name="Bowman S."/>
            <person name="Brooks K."/>
            <person name="Brown D."/>
            <person name="Brown S."/>
            <person name="Chillingworth T."/>
            <person name="Churcher C.M."/>
            <person name="Collins M."/>
            <person name="Connor R."/>
            <person name="Cronin A."/>
            <person name="Davis P."/>
            <person name="Feltwell T."/>
            <person name="Fraser A."/>
            <person name="Gentles S."/>
            <person name="Goble A."/>
            <person name="Hamlin N."/>
            <person name="Harris D.E."/>
            <person name="Hidalgo J."/>
            <person name="Hodgson G."/>
            <person name="Holroyd S."/>
            <person name="Hornsby T."/>
            <person name="Howarth S."/>
            <person name="Huckle E.J."/>
            <person name="Hunt S."/>
            <person name="Jagels K."/>
            <person name="James K.D."/>
            <person name="Jones L."/>
            <person name="Jones M."/>
            <person name="Leather S."/>
            <person name="McDonald S."/>
            <person name="McLean J."/>
            <person name="Mooney P."/>
            <person name="Moule S."/>
            <person name="Mungall K.L."/>
            <person name="Murphy L.D."/>
            <person name="Niblett D."/>
            <person name="Odell C."/>
            <person name="Oliver K."/>
            <person name="O'Neil S."/>
            <person name="Pearson D."/>
            <person name="Quail M.A."/>
            <person name="Rabbinowitsch E."/>
            <person name="Rutherford K.M."/>
            <person name="Rutter S."/>
            <person name="Saunders D."/>
            <person name="Seeger K."/>
            <person name="Sharp S."/>
            <person name="Skelton J."/>
            <person name="Simmonds M.N."/>
            <person name="Squares R."/>
            <person name="Squares S."/>
            <person name="Stevens K."/>
            <person name="Taylor K."/>
            <person name="Taylor R.G."/>
            <person name="Tivey A."/>
            <person name="Walsh S.V."/>
            <person name="Warren T."/>
            <person name="Whitehead S."/>
            <person name="Woodward J.R."/>
            <person name="Volckaert G."/>
            <person name="Aert R."/>
            <person name="Robben J."/>
            <person name="Grymonprez B."/>
            <person name="Weltjens I."/>
            <person name="Vanstreels E."/>
            <person name="Rieger M."/>
            <person name="Schaefer M."/>
            <person name="Mueller-Auer S."/>
            <person name="Gabel C."/>
            <person name="Fuchs M."/>
            <person name="Duesterhoeft A."/>
            <person name="Fritzc C."/>
            <person name="Holzer E."/>
            <person name="Moestl D."/>
            <person name="Hilbert H."/>
            <person name="Borzym K."/>
            <person name="Langer I."/>
            <person name="Beck A."/>
            <person name="Lehrach H."/>
            <person name="Reinhardt R."/>
            <person name="Pohl T.M."/>
            <person name="Eger P."/>
            <person name="Zimmermann W."/>
            <person name="Wedler H."/>
            <person name="Wambutt R."/>
            <person name="Purnelle B."/>
            <person name="Goffeau A."/>
            <person name="Cadieu E."/>
            <person name="Dreano S."/>
            <person name="Gloux S."/>
            <person name="Lelaure V."/>
            <person name="Mottier S."/>
            <person name="Galibert F."/>
            <person name="Aves S.J."/>
            <person name="Xiang Z."/>
            <person name="Hunt C."/>
            <person name="Moore K."/>
            <person name="Hurst S.M."/>
            <person name="Lucas M."/>
            <person name="Rochet M."/>
            <person name="Gaillardin C."/>
            <person name="Tallada V.A."/>
            <person name="Garzon A."/>
            <person name="Thode G."/>
            <person name="Daga R.R."/>
            <person name="Cruzado L."/>
            <person name="Jimenez J."/>
            <person name="Sanchez M."/>
            <person name="del Rey F."/>
            <person name="Benito J."/>
            <person name="Dominguez A."/>
            <person name="Revuelta J.L."/>
            <person name="Moreno S."/>
            <person name="Armstrong J."/>
            <person name="Forsburg S.L."/>
            <person name="Cerutti L."/>
            <person name="Lowe T."/>
            <person name="McCombie W.R."/>
            <person name="Paulsen I."/>
            <person name="Potashkin J."/>
            <person name="Shpakovski G.V."/>
            <person name="Ussery D."/>
            <person name="Barrell B.G."/>
            <person name="Nurse P."/>
        </authorList>
    </citation>
    <scope>NUCLEOTIDE SEQUENCE [LARGE SCALE GENOMIC DNA]</scope>
    <source>
        <strain>972 / ATCC 24843</strain>
    </source>
</reference>
<reference key="2">
    <citation type="journal article" date="2002" name="Mol. Cell. Biol.">
        <title>Proteomics analysis reveals stable multiprotein complexes in both fission and budding yeasts containing Myb-related Cdc5p/Cef1p, novel pre-mRNA splicing factors, and snRNAs.</title>
        <authorList>
            <person name="Ohi M.D."/>
            <person name="Link A.J."/>
            <person name="Ren L."/>
            <person name="Jennings J.L."/>
            <person name="McDonald W.H."/>
            <person name="Gould K.L."/>
        </authorList>
    </citation>
    <scope>IDENTIFICATION IN THE CWF COMPLEX</scope>
    <scope>IDENTIFICATION BY MASS SPECTROMETRY</scope>
</reference>
<reference key="3">
    <citation type="journal article" date="2006" name="Nat. Biotechnol.">
        <title>ORFeome cloning and global analysis of protein localization in the fission yeast Schizosaccharomyces pombe.</title>
        <authorList>
            <person name="Matsuyama A."/>
            <person name="Arai R."/>
            <person name="Yashiroda Y."/>
            <person name="Shirai A."/>
            <person name="Kamata A."/>
            <person name="Sekido S."/>
            <person name="Kobayashi Y."/>
            <person name="Hashimoto A."/>
            <person name="Hamamoto M."/>
            <person name="Hiraoka Y."/>
            <person name="Horinouchi S."/>
            <person name="Yoshida M."/>
        </authorList>
    </citation>
    <scope>SUBCELLULAR LOCATION [LARGE SCALE ANALYSIS]</scope>
</reference>
<reference key="4">
    <citation type="journal article" date="2014" name="Mol. Cell. Biol.">
        <title>Characterization and in vivo functional analysis of the Schizosaccharomyces pombe ICLN gene.</title>
        <authorList>
            <person name="Barbarossa A."/>
            <person name="Antoine E."/>
            <person name="Neel H."/>
            <person name="Gostan T."/>
            <person name="Soret J."/>
            <person name="Bordonne R."/>
        </authorList>
    </citation>
    <scope>INTERACTION WITH SAF5</scope>
</reference>
<evidence type="ECO:0000250" key="1">
    <source>
        <dbReference type="UniProtKB" id="P62318"/>
    </source>
</evidence>
<evidence type="ECO:0000255" key="2">
    <source>
        <dbReference type="PROSITE-ProRule" id="PRU01346"/>
    </source>
</evidence>
<evidence type="ECO:0000269" key="3">
    <source>
    </source>
</evidence>
<evidence type="ECO:0000269" key="4">
    <source>
    </source>
</evidence>
<evidence type="ECO:0000269" key="5">
    <source>
    </source>
</evidence>
<evidence type="ECO:0000305" key="6"/>
<evidence type="ECO:0007829" key="7">
    <source>
        <dbReference type="PDB" id="9ESH"/>
    </source>
</evidence>
<evidence type="ECO:0007829" key="8">
    <source>
        <dbReference type="PDB" id="9ESI"/>
    </source>
</evidence>
<organism>
    <name type="scientific">Schizosaccharomyces pombe (strain 972 / ATCC 24843)</name>
    <name type="common">Fission yeast</name>
    <dbReference type="NCBI Taxonomy" id="284812"/>
    <lineage>
        <taxon>Eukaryota</taxon>
        <taxon>Fungi</taxon>
        <taxon>Dikarya</taxon>
        <taxon>Ascomycota</taxon>
        <taxon>Taphrinomycotina</taxon>
        <taxon>Schizosaccharomycetes</taxon>
        <taxon>Schizosaccharomycetales</taxon>
        <taxon>Schizosaccharomycetaceae</taxon>
        <taxon>Schizosaccharomyces</taxon>
    </lineage>
</organism>
<name>SMD3_SCHPO</name>
<proteinExistence type="evidence at protein level"/>
<keyword id="KW-0002">3D-structure</keyword>
<keyword id="KW-0963">Cytoplasm</keyword>
<keyword id="KW-0507">mRNA processing</keyword>
<keyword id="KW-0508">mRNA splicing</keyword>
<keyword id="KW-0539">Nucleus</keyword>
<keyword id="KW-1185">Reference proteome</keyword>
<keyword id="KW-0687">Ribonucleoprotein</keyword>
<keyword id="KW-0747">Spliceosome</keyword>
<dbReference type="EMBL" id="CU329671">
    <property type="protein sequence ID" value="CAB52041.1"/>
    <property type="molecule type" value="Genomic_DNA"/>
</dbReference>
<dbReference type="PIR" id="T39805">
    <property type="entry name" value="T39805"/>
</dbReference>
<dbReference type="RefSeq" id="NP_595699.1">
    <property type="nucleotide sequence ID" value="NM_001021596.2"/>
</dbReference>
<dbReference type="PDB" id="3JB9">
    <property type="method" value="EM"/>
    <property type="resolution" value="3.60 A"/>
    <property type="chains" value="D/Z=1-97"/>
</dbReference>
<dbReference type="PDB" id="9ESH">
    <property type="method" value="EM"/>
    <property type="resolution" value="3.20 A"/>
    <property type="chains" value="D=1-97"/>
</dbReference>
<dbReference type="PDB" id="9ESI">
    <property type="method" value="EM"/>
    <property type="resolution" value="3.10 A"/>
    <property type="chains" value="D=1-97"/>
</dbReference>
<dbReference type="PDBsum" id="3JB9"/>
<dbReference type="PDBsum" id="9ESH"/>
<dbReference type="PDBsum" id="9ESI"/>
<dbReference type="EMDB" id="EMD-19941"/>
<dbReference type="EMDB" id="EMD-19942"/>
<dbReference type="SMR" id="Q9UUC6"/>
<dbReference type="BioGRID" id="277401">
    <property type="interactions" value="27"/>
</dbReference>
<dbReference type="FunCoup" id="Q9UUC6">
    <property type="interactions" value="800"/>
</dbReference>
<dbReference type="IntAct" id="Q9UUC6">
    <property type="interactions" value="5"/>
</dbReference>
<dbReference type="STRING" id="284812.Q9UUC6"/>
<dbReference type="iPTMnet" id="Q9UUC6"/>
<dbReference type="PaxDb" id="4896-SPBC19C2.14.1"/>
<dbReference type="EnsemblFungi" id="SPBC19C2.14.1">
    <property type="protein sequence ID" value="SPBC19C2.14.1:pep"/>
    <property type="gene ID" value="SPBC19C2.14"/>
</dbReference>
<dbReference type="GeneID" id="2540884"/>
<dbReference type="KEGG" id="spo:2540884"/>
<dbReference type="PomBase" id="SPBC19C2.14">
    <property type="gene designation" value="smd3"/>
</dbReference>
<dbReference type="VEuPathDB" id="FungiDB:SPBC19C2.14"/>
<dbReference type="eggNOG" id="KOG3172">
    <property type="taxonomic scope" value="Eukaryota"/>
</dbReference>
<dbReference type="HOGENOM" id="CLU_099537_1_2_1"/>
<dbReference type="InParanoid" id="Q9UUC6"/>
<dbReference type="OMA" id="CQMSAIT"/>
<dbReference type="PhylomeDB" id="Q9UUC6"/>
<dbReference type="Reactome" id="R-SPO-72163">
    <property type="pathway name" value="mRNA Splicing - Major Pathway"/>
</dbReference>
<dbReference type="PRO" id="PR:Q9UUC6"/>
<dbReference type="Proteomes" id="UP000002485">
    <property type="component" value="Chromosome II"/>
</dbReference>
<dbReference type="GO" id="GO:0071013">
    <property type="term" value="C:catalytic step 2 spliceosome"/>
    <property type="evidence" value="ECO:0000318"/>
    <property type="project" value="GO_Central"/>
</dbReference>
<dbReference type="GO" id="GO:0000243">
    <property type="term" value="C:commitment complex"/>
    <property type="evidence" value="ECO:0000318"/>
    <property type="project" value="GO_Central"/>
</dbReference>
<dbReference type="GO" id="GO:0005829">
    <property type="term" value="C:cytosol"/>
    <property type="evidence" value="ECO:0007669"/>
    <property type="project" value="UniProtKB-SubCell"/>
</dbReference>
<dbReference type="GO" id="GO:0005634">
    <property type="term" value="C:nucleus"/>
    <property type="evidence" value="ECO:0007005"/>
    <property type="project" value="PomBase"/>
</dbReference>
<dbReference type="GO" id="GO:0071014">
    <property type="term" value="C:post-mRNA release spliceosomal complex"/>
    <property type="evidence" value="ECO:0000314"/>
    <property type="project" value="PomBase"/>
</dbReference>
<dbReference type="GO" id="GO:0071011">
    <property type="term" value="C:precatalytic spliceosome"/>
    <property type="evidence" value="ECO:0000318"/>
    <property type="project" value="GO_Central"/>
</dbReference>
<dbReference type="GO" id="GO:0034719">
    <property type="term" value="C:SMN-Sm protein complex"/>
    <property type="evidence" value="ECO:0000318"/>
    <property type="project" value="GO_Central"/>
</dbReference>
<dbReference type="GO" id="GO:0005681">
    <property type="term" value="C:spliceosomal complex"/>
    <property type="evidence" value="ECO:0000314"/>
    <property type="project" value="PomBase"/>
</dbReference>
<dbReference type="GO" id="GO:0097526">
    <property type="term" value="C:spliceosomal tri-snRNP complex"/>
    <property type="evidence" value="ECO:0000318"/>
    <property type="project" value="GO_Central"/>
</dbReference>
<dbReference type="GO" id="GO:0005685">
    <property type="term" value="C:U1 snRNP"/>
    <property type="evidence" value="ECO:0000314"/>
    <property type="project" value="PomBase"/>
</dbReference>
<dbReference type="GO" id="GO:0005686">
    <property type="term" value="C:U2 snRNP"/>
    <property type="evidence" value="ECO:0000314"/>
    <property type="project" value="PomBase"/>
</dbReference>
<dbReference type="GO" id="GO:0071004">
    <property type="term" value="C:U2-type prespliceosome"/>
    <property type="evidence" value="ECO:0000266"/>
    <property type="project" value="PomBase"/>
</dbReference>
<dbReference type="GO" id="GO:0005687">
    <property type="term" value="C:U4 snRNP"/>
    <property type="evidence" value="ECO:0000318"/>
    <property type="project" value="GO_Central"/>
</dbReference>
<dbReference type="GO" id="GO:0046540">
    <property type="term" value="C:U4/U6 x U5 tri-snRNP complex"/>
    <property type="evidence" value="ECO:0000250"/>
    <property type="project" value="PomBase"/>
</dbReference>
<dbReference type="GO" id="GO:0005682">
    <property type="term" value="C:U5 snRNP"/>
    <property type="evidence" value="ECO:0000314"/>
    <property type="project" value="PomBase"/>
</dbReference>
<dbReference type="GO" id="GO:0003729">
    <property type="term" value="F:mRNA binding"/>
    <property type="evidence" value="ECO:0000250"/>
    <property type="project" value="PomBase"/>
</dbReference>
<dbReference type="GO" id="GO:0003723">
    <property type="term" value="F:RNA binding"/>
    <property type="evidence" value="ECO:0000318"/>
    <property type="project" value="GO_Central"/>
</dbReference>
<dbReference type="GO" id="GO:0000395">
    <property type="term" value="P:mRNA 5'-splice site recognition"/>
    <property type="evidence" value="ECO:0000305"/>
    <property type="project" value="PomBase"/>
</dbReference>
<dbReference type="GO" id="GO:0045292">
    <property type="term" value="P:mRNA cis splicing, via spliceosome"/>
    <property type="evidence" value="ECO:0000269"/>
    <property type="project" value="PomBase"/>
</dbReference>
<dbReference type="GO" id="GO:0000387">
    <property type="term" value="P:spliceosomal snRNP assembly"/>
    <property type="evidence" value="ECO:0000318"/>
    <property type="project" value="GO_Central"/>
</dbReference>
<dbReference type="CDD" id="cd01721">
    <property type="entry name" value="Sm_D3"/>
    <property type="match status" value="1"/>
</dbReference>
<dbReference type="FunFam" id="2.30.30.100:FF:000002">
    <property type="entry name" value="Small nuclear ribonucleoprotein Sm D3"/>
    <property type="match status" value="1"/>
</dbReference>
<dbReference type="Gene3D" id="2.30.30.100">
    <property type="match status" value="1"/>
</dbReference>
<dbReference type="InterPro" id="IPR027141">
    <property type="entry name" value="LSm4/Sm_D1/D3"/>
</dbReference>
<dbReference type="InterPro" id="IPR010920">
    <property type="entry name" value="LSM_dom_sf"/>
</dbReference>
<dbReference type="InterPro" id="IPR047575">
    <property type="entry name" value="Sm"/>
</dbReference>
<dbReference type="InterPro" id="IPR001163">
    <property type="entry name" value="Sm_dom_euk/arc"/>
</dbReference>
<dbReference type="InterPro" id="IPR034099">
    <property type="entry name" value="SmD3"/>
</dbReference>
<dbReference type="PANTHER" id="PTHR23338">
    <property type="entry name" value="SMALL NUCLEAR RIBONUCLEOPROTEIN SM"/>
    <property type="match status" value="1"/>
</dbReference>
<dbReference type="Pfam" id="PF01423">
    <property type="entry name" value="LSM"/>
    <property type="match status" value="1"/>
</dbReference>
<dbReference type="SMART" id="SM00651">
    <property type="entry name" value="Sm"/>
    <property type="match status" value="1"/>
</dbReference>
<dbReference type="SUPFAM" id="SSF50182">
    <property type="entry name" value="Sm-like ribonucleoproteins"/>
    <property type="match status" value="1"/>
</dbReference>
<dbReference type="PROSITE" id="PS52002">
    <property type="entry name" value="SM"/>
    <property type="match status" value="1"/>
</dbReference>
<sequence>MSLCIKLLHETQGHIVTMELENGSTYRGKLIEAEDNMNCQMRDISVTARDGRVSHLDQVYIRGSHIRFLIVPDMLRNAPMFKVGPGRSVPLPTRGRR</sequence>
<accession>Q9UUC6</accession>
<gene>
    <name type="primary">smd3</name>
    <name type="ORF">SPBC19C2.14</name>
</gene>
<feature type="chain" id="PRO_0000122219" description="Small nuclear ribonucleoprotein Sm D3">
    <location>
        <begin position="1"/>
        <end position="97"/>
    </location>
</feature>
<feature type="domain" description="Sm" evidence="2">
    <location>
        <begin position="3"/>
        <end position="75"/>
    </location>
</feature>
<feature type="helix" evidence="8">
    <location>
        <begin position="3"/>
        <end position="11"/>
    </location>
</feature>
<feature type="strand" evidence="8">
    <location>
        <begin position="14"/>
        <end position="20"/>
    </location>
</feature>
<feature type="strand" evidence="8">
    <location>
        <begin position="25"/>
        <end position="33"/>
    </location>
</feature>
<feature type="strand" evidence="8">
    <location>
        <begin position="39"/>
        <end position="47"/>
    </location>
</feature>
<feature type="strand" evidence="7">
    <location>
        <begin position="49"/>
        <end position="51"/>
    </location>
</feature>
<feature type="strand" evidence="8">
    <location>
        <begin position="53"/>
        <end position="61"/>
    </location>
</feature>
<feature type="helix" evidence="8">
    <location>
        <begin position="63"/>
        <end position="65"/>
    </location>
</feature>
<feature type="strand" evidence="8">
    <location>
        <begin position="66"/>
        <end position="71"/>
    </location>
</feature>
<feature type="helix" evidence="8">
    <location>
        <begin position="73"/>
        <end position="77"/>
    </location>
</feature>
<comment type="function">
    <text evidence="1">Plays a role in pre-mRNA splicing as a core component of the spliceosomal U1, U2, U4 and U5 small nuclear ribonucleoproteins (snRNPs), the building blocks of the spliceosome (By similarity).</text>
</comment>
<comment type="subunit">
    <text evidence="3 5">Belongs to the 40S cdc5-associated complex (or cwf complex), a spliceosome sub-complex reminiscent of a late-stage spliceosome composed of the U2, U5 and U6 snRNAs and at least brr2, cdc5, cwf2/prp3, cwf3/syf1, cwf4/syf3, cwf5/ecm2, spp42/cwf6, cwf7/spf27, cwf8, cwf9, cwf10, cwf11, cwf12, prp45/cwf13, cwf14, cwf15, cwf16, cwf17, cwf18, cwf19, cwf20, cwf21, cwf22, cwf23, cwf24, cwf25, cwf26, cyp7/cwf27, cwf28, cwf29/ist3, lea1, msl1, prp5/cwf1, prp10, prp12/sap130, prp17, prp22, sap61, sap62, sap114, sap145, slu7, smb1, smd1, smd3, smf1, smg1 and syf2 (PubMed:11884590). Interacts with saf5; the interaction is direct (PubMed:24298023).</text>
</comment>
<comment type="subcellular location">
    <subcellularLocation>
        <location evidence="4">Nucleus</location>
    </subcellularLocation>
    <subcellularLocation>
        <location evidence="1">Cytoplasm</location>
        <location evidence="1">Cytosol</location>
    </subcellularLocation>
</comment>
<comment type="similarity">
    <text evidence="6">Belongs to the snRNP core protein family.</text>
</comment>